<organism>
    <name type="scientific">Halorubrum lacusprofundi (strain ATCC 49239 / DSM 5036 / JCM 8891 / ACAM 34)</name>
    <dbReference type="NCBI Taxonomy" id="416348"/>
    <lineage>
        <taxon>Archaea</taxon>
        <taxon>Methanobacteriati</taxon>
        <taxon>Methanobacteriota</taxon>
        <taxon>Stenosarchaea group</taxon>
        <taxon>Halobacteria</taxon>
        <taxon>Halobacteriales</taxon>
        <taxon>Haloferacaceae</taxon>
        <taxon>Halorubrum</taxon>
    </lineage>
</organism>
<accession>B9LUA0</accession>
<feature type="chain" id="PRO_1000135762" description="Glycerol-1-phosphate dehydrogenase [NAD(P)+]">
    <location>
        <begin position="1"/>
        <end position="350"/>
    </location>
</feature>
<feature type="binding site" evidence="1">
    <location>
        <begin position="94"/>
        <end position="98"/>
    </location>
    <ligand>
        <name>NAD(+)</name>
        <dbReference type="ChEBI" id="CHEBI:57540"/>
    </ligand>
</feature>
<feature type="binding site" evidence="1">
    <location>
        <begin position="116"/>
        <end position="119"/>
    </location>
    <ligand>
        <name>NAD(+)</name>
        <dbReference type="ChEBI" id="CHEBI:57540"/>
    </ligand>
</feature>
<feature type="binding site" evidence="1">
    <location>
        <position position="121"/>
    </location>
    <ligand>
        <name>substrate</name>
    </ligand>
</feature>
<feature type="binding site" evidence="1">
    <location>
        <position position="125"/>
    </location>
    <ligand>
        <name>NAD(+)</name>
        <dbReference type="ChEBI" id="CHEBI:57540"/>
    </ligand>
</feature>
<feature type="binding site" evidence="1">
    <location>
        <position position="168"/>
    </location>
    <ligand>
        <name>substrate</name>
    </ligand>
</feature>
<feature type="binding site" evidence="1">
    <location>
        <position position="168"/>
    </location>
    <ligand>
        <name>Zn(2+)</name>
        <dbReference type="ChEBI" id="CHEBI:29105"/>
        <note>catalytic</note>
    </ligand>
</feature>
<feature type="binding site" evidence="1">
    <location>
        <position position="248"/>
    </location>
    <ligand>
        <name>Zn(2+)</name>
        <dbReference type="ChEBI" id="CHEBI:29105"/>
        <note>catalytic</note>
    </ligand>
</feature>
<feature type="binding site" evidence="1">
    <location>
        <position position="252"/>
    </location>
    <ligand>
        <name>substrate</name>
    </ligand>
</feature>
<feature type="binding site" evidence="1">
    <location>
        <position position="264"/>
    </location>
    <ligand>
        <name>Zn(2+)</name>
        <dbReference type="ChEBI" id="CHEBI:29105"/>
        <note>catalytic</note>
    </ligand>
</feature>
<protein>
    <recommendedName>
        <fullName evidence="1">Glycerol-1-phosphate dehydrogenase [NAD(P)+]</fullName>
        <shortName evidence="1">G1P dehydrogenase</shortName>
        <shortName evidence="1">G1PDH</shortName>
        <ecNumber evidence="1">1.1.1.261</ecNumber>
    </recommendedName>
    <alternativeName>
        <fullName evidence="1">Enantiomeric glycerophosphate synthase</fullName>
    </alternativeName>
    <alternativeName>
        <fullName evidence="1">sn-glycerol-1-phosphate dehydrogenase</fullName>
    </alternativeName>
</protein>
<dbReference type="EC" id="1.1.1.261" evidence="1"/>
<dbReference type="EMBL" id="CP001365">
    <property type="protein sequence ID" value="ACM56257.1"/>
    <property type="molecule type" value="Genomic_DNA"/>
</dbReference>
<dbReference type="RefSeq" id="WP_012659889.1">
    <property type="nucleotide sequence ID" value="NC_012029.1"/>
</dbReference>
<dbReference type="SMR" id="B9LUA0"/>
<dbReference type="GeneID" id="7401790"/>
<dbReference type="KEGG" id="hla:Hlac_0655"/>
<dbReference type="eggNOG" id="arCOG00982">
    <property type="taxonomic scope" value="Archaea"/>
</dbReference>
<dbReference type="HOGENOM" id="CLU_038362_0_0_2"/>
<dbReference type="UniPathway" id="UPA00940"/>
<dbReference type="Proteomes" id="UP000000740">
    <property type="component" value="Chromosome 1"/>
</dbReference>
<dbReference type="GO" id="GO:0005737">
    <property type="term" value="C:cytoplasm"/>
    <property type="evidence" value="ECO:0007669"/>
    <property type="project" value="UniProtKB-SubCell"/>
</dbReference>
<dbReference type="GO" id="GO:0106357">
    <property type="term" value="F:glycerol-1-phosphate dehydrogenase (NAD+) activity"/>
    <property type="evidence" value="ECO:0007669"/>
    <property type="project" value="RHEA"/>
</dbReference>
<dbReference type="GO" id="GO:0106358">
    <property type="term" value="F:glycerol-1-phosphate dehydrogenase (NADP+) activity"/>
    <property type="evidence" value="ECO:0007669"/>
    <property type="project" value="RHEA"/>
</dbReference>
<dbReference type="GO" id="GO:0046872">
    <property type="term" value="F:metal ion binding"/>
    <property type="evidence" value="ECO:0007669"/>
    <property type="project" value="UniProtKB-KW"/>
</dbReference>
<dbReference type="GO" id="GO:0006650">
    <property type="term" value="P:glycerophospholipid metabolic process"/>
    <property type="evidence" value="ECO:0007669"/>
    <property type="project" value="UniProtKB-UniRule"/>
</dbReference>
<dbReference type="GO" id="GO:0008654">
    <property type="term" value="P:phospholipid biosynthetic process"/>
    <property type="evidence" value="ECO:0007669"/>
    <property type="project" value="UniProtKB-KW"/>
</dbReference>
<dbReference type="CDD" id="cd08173">
    <property type="entry name" value="Gro1PDH"/>
    <property type="match status" value="1"/>
</dbReference>
<dbReference type="Gene3D" id="3.40.50.1970">
    <property type="match status" value="1"/>
</dbReference>
<dbReference type="Gene3D" id="1.20.1090.10">
    <property type="entry name" value="Dehydroquinate synthase-like - alpha domain"/>
    <property type="match status" value="1"/>
</dbReference>
<dbReference type="HAMAP" id="MF_00497_A">
    <property type="entry name" value="G1P_dehydrogenase_A"/>
    <property type="match status" value="1"/>
</dbReference>
<dbReference type="InterPro" id="IPR023002">
    <property type="entry name" value="G1P_dehydrogenase_arc"/>
</dbReference>
<dbReference type="InterPro" id="IPR032837">
    <property type="entry name" value="G1PDH"/>
</dbReference>
<dbReference type="InterPro" id="IPR016205">
    <property type="entry name" value="Glycerol_DH"/>
</dbReference>
<dbReference type="NCBIfam" id="NF002022">
    <property type="entry name" value="PRK00843.1"/>
    <property type="match status" value="1"/>
</dbReference>
<dbReference type="PANTHER" id="PTHR43616">
    <property type="entry name" value="GLYCEROL DEHYDROGENASE"/>
    <property type="match status" value="1"/>
</dbReference>
<dbReference type="PANTHER" id="PTHR43616:SF5">
    <property type="entry name" value="GLYCEROL DEHYDROGENASE 1"/>
    <property type="match status" value="1"/>
</dbReference>
<dbReference type="Pfam" id="PF13685">
    <property type="entry name" value="Fe-ADH_2"/>
    <property type="match status" value="1"/>
</dbReference>
<dbReference type="PIRSF" id="PIRSF000112">
    <property type="entry name" value="Glycerol_dehydrogenase"/>
    <property type="match status" value="1"/>
</dbReference>
<dbReference type="SUPFAM" id="SSF56796">
    <property type="entry name" value="Dehydroquinate synthase-like"/>
    <property type="match status" value="1"/>
</dbReference>
<evidence type="ECO:0000255" key="1">
    <source>
        <dbReference type="HAMAP-Rule" id="MF_00497"/>
    </source>
</evidence>
<reference key="1">
    <citation type="journal article" date="2016" name="Stand. Genomic Sci.">
        <title>Complete genome sequence of the Antarctic Halorubrum lacusprofundi type strain ACAM 34.</title>
        <authorList>
            <person name="Anderson I.J."/>
            <person name="DasSarma P."/>
            <person name="Lucas S."/>
            <person name="Copeland A."/>
            <person name="Lapidus A."/>
            <person name="Del Rio T.G."/>
            <person name="Tice H."/>
            <person name="Dalin E."/>
            <person name="Bruce D.C."/>
            <person name="Goodwin L."/>
            <person name="Pitluck S."/>
            <person name="Sims D."/>
            <person name="Brettin T.S."/>
            <person name="Detter J.C."/>
            <person name="Han C.S."/>
            <person name="Larimer F."/>
            <person name="Hauser L."/>
            <person name="Land M."/>
            <person name="Ivanova N."/>
            <person name="Richardson P."/>
            <person name="Cavicchioli R."/>
            <person name="DasSarma S."/>
            <person name="Woese C.R."/>
            <person name="Kyrpides N.C."/>
        </authorList>
    </citation>
    <scope>NUCLEOTIDE SEQUENCE [LARGE SCALE GENOMIC DNA]</scope>
    <source>
        <strain>ATCC 49239 / DSM 5036 / JCM 8891 / ACAM 34</strain>
    </source>
</reference>
<proteinExistence type="inferred from homology"/>
<gene>
    <name evidence="1" type="primary">egsA</name>
    <name type="ordered locus">Hlac_0655</name>
</gene>
<comment type="function">
    <text evidence="1">Catalyzes the NAD(P)H-dependent reduction of dihydroxyacetonephosphate (DHAP or glycerone phosphate) to glycerol 1-phosphate (G1P). The G1P thus generated is used as the glycerophosphate backbone of phospholipids in the cellular membranes of Archaea.</text>
</comment>
<comment type="catalytic activity">
    <reaction evidence="1">
        <text>sn-glycerol 1-phosphate + NAD(+) = dihydroxyacetone phosphate + NADH + H(+)</text>
        <dbReference type="Rhea" id="RHEA:21412"/>
        <dbReference type="ChEBI" id="CHEBI:15378"/>
        <dbReference type="ChEBI" id="CHEBI:57540"/>
        <dbReference type="ChEBI" id="CHEBI:57642"/>
        <dbReference type="ChEBI" id="CHEBI:57685"/>
        <dbReference type="ChEBI" id="CHEBI:57945"/>
        <dbReference type="EC" id="1.1.1.261"/>
    </reaction>
</comment>
<comment type="catalytic activity">
    <reaction evidence="1">
        <text>sn-glycerol 1-phosphate + NADP(+) = dihydroxyacetone phosphate + NADPH + H(+)</text>
        <dbReference type="Rhea" id="RHEA:21416"/>
        <dbReference type="ChEBI" id="CHEBI:15378"/>
        <dbReference type="ChEBI" id="CHEBI:57642"/>
        <dbReference type="ChEBI" id="CHEBI:57685"/>
        <dbReference type="ChEBI" id="CHEBI:57783"/>
        <dbReference type="ChEBI" id="CHEBI:58349"/>
        <dbReference type="EC" id="1.1.1.261"/>
    </reaction>
</comment>
<comment type="cofactor">
    <cofactor evidence="1">
        <name>Zn(2+)</name>
        <dbReference type="ChEBI" id="CHEBI:29105"/>
    </cofactor>
    <text evidence="1">Binds 1 zinc ion per subunit.</text>
</comment>
<comment type="pathway">
    <text evidence="1">Membrane lipid metabolism; glycerophospholipid metabolism.</text>
</comment>
<comment type="subcellular location">
    <subcellularLocation>
        <location evidence="1">Cytoplasm</location>
    </subcellularLocation>
</comment>
<comment type="similarity">
    <text evidence="1">Belongs to the glycerol-1-phosphate dehydrogenase family.</text>
</comment>
<name>G1PDH_HALLT</name>
<sequence>MFEKTTWIKLPRNVLVGHGVLDDLGEAVGELYLTGRPLIVTSPTPNDIAGDRVRAQFDDPATAVVEEASFEAVEKLTETAEAVDPGYLIALGGGKPIDIAKMAADHLGVGFVSVPTVASHDGIVSGRSSIPEGDTRHSVAADPPLAVVADTTLIADAPWRLTTAGCADIISNYTAVKDWRLARRLRNVEYSEYAGALSEMTAELLVENADMIRPGLEESAWVVVKALVSSGVAMSIAGSSRPASGAEHLISHQLDRSAPGRALHGHQVGVASIMTEYLHSGENGEWSAIRDALAALDAPTTAAELGLDDAELIAALTSAHEIRDRYTILQGGINEAAAIEVATATGVIDG</sequence>
<keyword id="KW-0963">Cytoplasm</keyword>
<keyword id="KW-0444">Lipid biosynthesis</keyword>
<keyword id="KW-0443">Lipid metabolism</keyword>
<keyword id="KW-0479">Metal-binding</keyword>
<keyword id="KW-0520">NAD</keyword>
<keyword id="KW-0521">NADP</keyword>
<keyword id="KW-0560">Oxidoreductase</keyword>
<keyword id="KW-0594">Phospholipid biosynthesis</keyword>
<keyword id="KW-1208">Phospholipid metabolism</keyword>
<keyword id="KW-1185">Reference proteome</keyword>
<keyword id="KW-0862">Zinc</keyword>